<proteinExistence type="inferred from homology"/>
<organism>
    <name type="scientific">Campylobacter jejuni subsp. jejuni serotype O:6 (strain 81116 / NCTC 11828)</name>
    <dbReference type="NCBI Taxonomy" id="407148"/>
    <lineage>
        <taxon>Bacteria</taxon>
        <taxon>Pseudomonadati</taxon>
        <taxon>Campylobacterota</taxon>
        <taxon>Epsilonproteobacteria</taxon>
        <taxon>Campylobacterales</taxon>
        <taxon>Campylobacteraceae</taxon>
        <taxon>Campylobacter</taxon>
    </lineage>
</organism>
<protein>
    <recommendedName>
        <fullName evidence="1">Orotidine 5'-phosphate decarboxylase</fullName>
        <ecNumber evidence="1">4.1.1.23</ecNumber>
    </recommendedName>
    <alternativeName>
        <fullName evidence="1">OMP decarboxylase</fullName>
        <shortName evidence="1">OMPDCase</shortName>
        <shortName evidence="1">OMPdecase</shortName>
    </alternativeName>
</protein>
<reference key="1">
    <citation type="journal article" date="2007" name="J. Bacteriol.">
        <title>The complete genome sequence of Campylobacter jejuni strain 81116 (NCTC11828).</title>
        <authorList>
            <person name="Pearson B.M."/>
            <person name="Gaskin D.J.H."/>
            <person name="Segers R.P.A.M."/>
            <person name="Wells J.M."/>
            <person name="Nuijten P.J.M."/>
            <person name="van Vliet A.H.M."/>
        </authorList>
    </citation>
    <scope>NUCLEOTIDE SEQUENCE [LARGE SCALE GENOMIC DNA]</scope>
    <source>
        <strain>81116 / NCTC 11828</strain>
    </source>
</reference>
<keyword id="KW-0210">Decarboxylase</keyword>
<keyword id="KW-0456">Lyase</keyword>
<keyword id="KW-0665">Pyrimidine biosynthesis</keyword>
<name>PYRF_CAMJ8</name>
<accession>A8FKG8</accession>
<feature type="chain" id="PRO_1000073087" description="Orotidine 5'-phosphate decarboxylase">
    <location>
        <begin position="1"/>
        <end position="226"/>
    </location>
</feature>
<feature type="active site" description="Proton donor" evidence="1">
    <location>
        <position position="60"/>
    </location>
</feature>
<feature type="binding site" evidence="1">
    <location>
        <position position="8"/>
    </location>
    <ligand>
        <name>substrate</name>
    </ligand>
</feature>
<feature type="binding site" evidence="1">
    <location>
        <position position="30"/>
    </location>
    <ligand>
        <name>substrate</name>
    </ligand>
</feature>
<feature type="binding site" evidence="1">
    <location>
        <begin position="58"/>
        <end position="67"/>
    </location>
    <ligand>
        <name>substrate</name>
    </ligand>
</feature>
<feature type="binding site" evidence="1">
    <location>
        <position position="117"/>
    </location>
    <ligand>
        <name>substrate</name>
    </ligand>
</feature>
<feature type="binding site" evidence="1">
    <location>
        <position position="177"/>
    </location>
    <ligand>
        <name>substrate</name>
    </ligand>
</feature>
<feature type="binding site" evidence="1">
    <location>
        <position position="186"/>
    </location>
    <ligand>
        <name>substrate</name>
    </ligand>
</feature>
<feature type="binding site" evidence="1">
    <location>
        <position position="206"/>
    </location>
    <ligand>
        <name>substrate</name>
    </ligand>
</feature>
<feature type="binding site" evidence="1">
    <location>
        <position position="207"/>
    </location>
    <ligand>
        <name>substrate</name>
    </ligand>
</feature>
<gene>
    <name evidence="1" type="primary">pyrF</name>
    <name type="ordered locus">C8J_0356</name>
</gene>
<evidence type="ECO:0000255" key="1">
    <source>
        <dbReference type="HAMAP-Rule" id="MF_01200"/>
    </source>
</evidence>
<sequence length="226" mass="25941">MKLCVALDLSTKEECLQLAKELKNLDIWLKVGLRAYLRDGFKFIEELKKVDDFKIFLDLKIHDIPNTMADACEEISKLGVDMINIHASAGKIAMQEVMTRLSKFSKRPLVLAVSALTSFDEENFFSIYRQKIEEAVINFSKISYENGLDGMVCSVFESKIIKEHTQRNFLTLTPGIRPFGEKNDDQKRVANLTMARENLSDFIVVGRPIYKDNNPRKICEKILQEI</sequence>
<dbReference type="EC" id="4.1.1.23" evidence="1"/>
<dbReference type="EMBL" id="CP000814">
    <property type="protein sequence ID" value="ABV51955.1"/>
    <property type="molecule type" value="Genomic_DNA"/>
</dbReference>
<dbReference type="SMR" id="A8FKG8"/>
<dbReference type="KEGG" id="cju:C8J_0356"/>
<dbReference type="HOGENOM" id="CLU_067069_1_1_7"/>
<dbReference type="UniPathway" id="UPA00070">
    <property type="reaction ID" value="UER00120"/>
</dbReference>
<dbReference type="GO" id="GO:0005829">
    <property type="term" value="C:cytosol"/>
    <property type="evidence" value="ECO:0007669"/>
    <property type="project" value="TreeGrafter"/>
</dbReference>
<dbReference type="GO" id="GO:0004590">
    <property type="term" value="F:orotidine-5'-phosphate decarboxylase activity"/>
    <property type="evidence" value="ECO:0007669"/>
    <property type="project" value="UniProtKB-UniRule"/>
</dbReference>
<dbReference type="GO" id="GO:0006207">
    <property type="term" value="P:'de novo' pyrimidine nucleobase biosynthetic process"/>
    <property type="evidence" value="ECO:0007669"/>
    <property type="project" value="InterPro"/>
</dbReference>
<dbReference type="GO" id="GO:0044205">
    <property type="term" value="P:'de novo' UMP biosynthetic process"/>
    <property type="evidence" value="ECO:0007669"/>
    <property type="project" value="UniProtKB-UniRule"/>
</dbReference>
<dbReference type="CDD" id="cd04725">
    <property type="entry name" value="OMP_decarboxylase_like"/>
    <property type="match status" value="1"/>
</dbReference>
<dbReference type="Gene3D" id="3.20.20.70">
    <property type="entry name" value="Aldolase class I"/>
    <property type="match status" value="1"/>
</dbReference>
<dbReference type="HAMAP" id="MF_01200_B">
    <property type="entry name" value="OMPdecase_type1_B"/>
    <property type="match status" value="1"/>
</dbReference>
<dbReference type="InterPro" id="IPR013785">
    <property type="entry name" value="Aldolase_TIM"/>
</dbReference>
<dbReference type="InterPro" id="IPR014732">
    <property type="entry name" value="OMPdecase"/>
</dbReference>
<dbReference type="InterPro" id="IPR018089">
    <property type="entry name" value="OMPdecase_AS"/>
</dbReference>
<dbReference type="InterPro" id="IPR047596">
    <property type="entry name" value="OMPdecase_bac"/>
</dbReference>
<dbReference type="InterPro" id="IPR001754">
    <property type="entry name" value="OMPdeCOase_dom"/>
</dbReference>
<dbReference type="InterPro" id="IPR011060">
    <property type="entry name" value="RibuloseP-bd_barrel"/>
</dbReference>
<dbReference type="NCBIfam" id="NF001273">
    <property type="entry name" value="PRK00230.1"/>
    <property type="match status" value="1"/>
</dbReference>
<dbReference type="NCBIfam" id="TIGR01740">
    <property type="entry name" value="pyrF"/>
    <property type="match status" value="1"/>
</dbReference>
<dbReference type="PANTHER" id="PTHR32119">
    <property type="entry name" value="OROTIDINE 5'-PHOSPHATE DECARBOXYLASE"/>
    <property type="match status" value="1"/>
</dbReference>
<dbReference type="PANTHER" id="PTHR32119:SF2">
    <property type="entry name" value="OROTIDINE 5'-PHOSPHATE DECARBOXYLASE"/>
    <property type="match status" value="1"/>
</dbReference>
<dbReference type="Pfam" id="PF00215">
    <property type="entry name" value="OMPdecase"/>
    <property type="match status" value="1"/>
</dbReference>
<dbReference type="SMART" id="SM00934">
    <property type="entry name" value="OMPdecase"/>
    <property type="match status" value="1"/>
</dbReference>
<dbReference type="SUPFAM" id="SSF51366">
    <property type="entry name" value="Ribulose-phoshate binding barrel"/>
    <property type="match status" value="1"/>
</dbReference>
<dbReference type="PROSITE" id="PS00156">
    <property type="entry name" value="OMPDECASE"/>
    <property type="match status" value="1"/>
</dbReference>
<comment type="function">
    <text evidence="1">Catalyzes the decarboxylation of orotidine 5'-monophosphate (OMP) to uridine 5'-monophosphate (UMP).</text>
</comment>
<comment type="catalytic activity">
    <reaction evidence="1">
        <text>orotidine 5'-phosphate + H(+) = UMP + CO2</text>
        <dbReference type="Rhea" id="RHEA:11596"/>
        <dbReference type="ChEBI" id="CHEBI:15378"/>
        <dbReference type="ChEBI" id="CHEBI:16526"/>
        <dbReference type="ChEBI" id="CHEBI:57538"/>
        <dbReference type="ChEBI" id="CHEBI:57865"/>
        <dbReference type="EC" id="4.1.1.23"/>
    </reaction>
</comment>
<comment type="pathway">
    <text evidence="1">Pyrimidine metabolism; UMP biosynthesis via de novo pathway; UMP from orotate: step 2/2.</text>
</comment>
<comment type="subunit">
    <text evidence="1">Homodimer.</text>
</comment>
<comment type="similarity">
    <text evidence="1">Belongs to the OMP decarboxylase family. Type 1 subfamily.</text>
</comment>